<organism>
    <name type="scientific">Salmonella dublin (strain CT_02021853)</name>
    <dbReference type="NCBI Taxonomy" id="439851"/>
    <lineage>
        <taxon>Bacteria</taxon>
        <taxon>Pseudomonadati</taxon>
        <taxon>Pseudomonadota</taxon>
        <taxon>Gammaproteobacteria</taxon>
        <taxon>Enterobacterales</taxon>
        <taxon>Enterobacteriaceae</taxon>
        <taxon>Salmonella</taxon>
    </lineage>
</organism>
<name>RS16_SALDC</name>
<keyword id="KW-0687">Ribonucleoprotein</keyword>
<keyword id="KW-0689">Ribosomal protein</keyword>
<comment type="similarity">
    <text evidence="1">Belongs to the bacterial ribosomal protein bS16 family.</text>
</comment>
<reference key="1">
    <citation type="journal article" date="2011" name="J. Bacteriol.">
        <title>Comparative genomics of 28 Salmonella enterica isolates: evidence for CRISPR-mediated adaptive sublineage evolution.</title>
        <authorList>
            <person name="Fricke W.F."/>
            <person name="Mammel M.K."/>
            <person name="McDermott P.F."/>
            <person name="Tartera C."/>
            <person name="White D.G."/>
            <person name="Leclerc J.E."/>
            <person name="Ravel J."/>
            <person name="Cebula T.A."/>
        </authorList>
    </citation>
    <scope>NUCLEOTIDE SEQUENCE [LARGE SCALE GENOMIC DNA]</scope>
    <source>
        <strain>CT_02021853</strain>
    </source>
</reference>
<protein>
    <recommendedName>
        <fullName evidence="1">Small ribosomal subunit protein bS16</fullName>
    </recommendedName>
    <alternativeName>
        <fullName evidence="2">30S ribosomal protein S16</fullName>
    </alternativeName>
</protein>
<feature type="chain" id="PRO_1000196466" description="Small ribosomal subunit protein bS16">
    <location>
        <begin position="1"/>
        <end position="82"/>
    </location>
</feature>
<sequence>MVTIRLARHGAKKRPFYQVVVTDSRNARNGRFIERVGFFNPIASEKEEGTRLDLDRIAHWVGQGATISDRVAALIKEVKKAA</sequence>
<dbReference type="EMBL" id="CP001144">
    <property type="protein sequence ID" value="ACH75717.1"/>
    <property type="molecule type" value="Genomic_DNA"/>
</dbReference>
<dbReference type="RefSeq" id="WP_000256453.1">
    <property type="nucleotide sequence ID" value="NC_011205.1"/>
</dbReference>
<dbReference type="SMR" id="B5FS09"/>
<dbReference type="KEGG" id="sed:SeD_A3004"/>
<dbReference type="HOGENOM" id="CLU_100590_5_1_6"/>
<dbReference type="Proteomes" id="UP000008322">
    <property type="component" value="Chromosome"/>
</dbReference>
<dbReference type="GO" id="GO:0005737">
    <property type="term" value="C:cytoplasm"/>
    <property type="evidence" value="ECO:0007669"/>
    <property type="project" value="UniProtKB-ARBA"/>
</dbReference>
<dbReference type="GO" id="GO:0015935">
    <property type="term" value="C:small ribosomal subunit"/>
    <property type="evidence" value="ECO:0007669"/>
    <property type="project" value="TreeGrafter"/>
</dbReference>
<dbReference type="GO" id="GO:0003735">
    <property type="term" value="F:structural constituent of ribosome"/>
    <property type="evidence" value="ECO:0007669"/>
    <property type="project" value="InterPro"/>
</dbReference>
<dbReference type="GO" id="GO:0006412">
    <property type="term" value="P:translation"/>
    <property type="evidence" value="ECO:0007669"/>
    <property type="project" value="UniProtKB-UniRule"/>
</dbReference>
<dbReference type="FunFam" id="3.30.1320.10:FF:000001">
    <property type="entry name" value="30S ribosomal protein S16"/>
    <property type="match status" value="1"/>
</dbReference>
<dbReference type="Gene3D" id="3.30.1320.10">
    <property type="match status" value="1"/>
</dbReference>
<dbReference type="HAMAP" id="MF_00385">
    <property type="entry name" value="Ribosomal_bS16"/>
    <property type="match status" value="1"/>
</dbReference>
<dbReference type="InterPro" id="IPR000307">
    <property type="entry name" value="Ribosomal_bS16"/>
</dbReference>
<dbReference type="InterPro" id="IPR020592">
    <property type="entry name" value="Ribosomal_bS16_CS"/>
</dbReference>
<dbReference type="InterPro" id="IPR023803">
    <property type="entry name" value="Ribosomal_bS16_dom_sf"/>
</dbReference>
<dbReference type="NCBIfam" id="TIGR00002">
    <property type="entry name" value="S16"/>
    <property type="match status" value="1"/>
</dbReference>
<dbReference type="PANTHER" id="PTHR12919">
    <property type="entry name" value="30S RIBOSOMAL PROTEIN S16"/>
    <property type="match status" value="1"/>
</dbReference>
<dbReference type="PANTHER" id="PTHR12919:SF20">
    <property type="entry name" value="SMALL RIBOSOMAL SUBUNIT PROTEIN BS16M"/>
    <property type="match status" value="1"/>
</dbReference>
<dbReference type="Pfam" id="PF00886">
    <property type="entry name" value="Ribosomal_S16"/>
    <property type="match status" value="1"/>
</dbReference>
<dbReference type="SUPFAM" id="SSF54565">
    <property type="entry name" value="Ribosomal protein S16"/>
    <property type="match status" value="1"/>
</dbReference>
<dbReference type="PROSITE" id="PS00732">
    <property type="entry name" value="RIBOSOMAL_S16"/>
    <property type="match status" value="1"/>
</dbReference>
<gene>
    <name evidence="1" type="primary">rpsP</name>
    <name type="ordered locus">SeD_A3004</name>
</gene>
<accession>B5FS09</accession>
<proteinExistence type="inferred from homology"/>
<evidence type="ECO:0000255" key="1">
    <source>
        <dbReference type="HAMAP-Rule" id="MF_00385"/>
    </source>
</evidence>
<evidence type="ECO:0000305" key="2"/>